<protein>
    <recommendedName>
        <fullName evidence="1">Dual-specificity RNA methyltransferase RlmN</fullName>
        <ecNumber evidence="1">2.1.1.192</ecNumber>
    </recommendedName>
    <alternativeName>
        <fullName evidence="1">23S rRNA (adenine(2503)-C(2))-methyltransferase</fullName>
    </alternativeName>
    <alternativeName>
        <fullName evidence="1">23S rRNA m2A2503 methyltransferase</fullName>
    </alternativeName>
    <alternativeName>
        <fullName evidence="1">Ribosomal RNA large subunit methyltransferase N</fullName>
    </alternativeName>
    <alternativeName>
        <fullName evidence="1">tRNA (adenine(37)-C(2))-methyltransferase</fullName>
    </alternativeName>
    <alternativeName>
        <fullName evidence="1">tRNA m2A37 methyltransferase</fullName>
    </alternativeName>
</protein>
<sequence length="388" mass="43415">MSELVNTSEVATVAVPNKNGKINLLDLNRQQMREFFLEMGEKPFRADQVMKWMYHYCSDNFDDMTDINKVLRNKLKDVAEIRAPEVVEEQRSADGTIKWAIAVGDQRVETVYIPEEDRATLCVSSQVGCALECKFCSTAQQGFNRNLRVSEIIGQVWRAAKIVGAAKVTGTRPITNVVMMGMGEPLLNLTNVVPAMEIMLDDFGFGLSKRRVTLSTSGVVPALDKLGDMIDVALAISLHAPNDEIRDEIVPVNKKYNIETFLAAVRRYLAKSNANQGRVTIEYVMLDHVNDETDHAHQLAELLKDTPCKINLIPWNPFPGAPYGRSSNSRIDRFSKVLMDYGFTTIVRKTRGDDIDAACGQLAGDVIDRTKRTLRKRMQGETIDVKAV</sequence>
<feature type="chain" id="PRO_0000350160" description="Dual-specificity RNA methyltransferase RlmN">
    <location>
        <begin position="1"/>
        <end position="388"/>
    </location>
</feature>
<feature type="domain" description="Radical SAM core" evidence="2">
    <location>
        <begin position="115"/>
        <end position="354"/>
    </location>
</feature>
<feature type="active site" description="Proton acceptor" evidence="1">
    <location>
        <position position="109"/>
    </location>
</feature>
<feature type="active site" description="S-methylcysteine intermediate" evidence="1">
    <location>
        <position position="359"/>
    </location>
</feature>
<feature type="binding site" evidence="1">
    <location>
        <position position="129"/>
    </location>
    <ligand>
        <name>[4Fe-4S] cluster</name>
        <dbReference type="ChEBI" id="CHEBI:49883"/>
        <note>4Fe-4S-S-AdoMet</note>
    </ligand>
</feature>
<feature type="binding site" evidence="1">
    <location>
        <position position="133"/>
    </location>
    <ligand>
        <name>[4Fe-4S] cluster</name>
        <dbReference type="ChEBI" id="CHEBI:49883"/>
        <note>4Fe-4S-S-AdoMet</note>
    </ligand>
</feature>
<feature type="binding site" evidence="1">
    <location>
        <position position="136"/>
    </location>
    <ligand>
        <name>[4Fe-4S] cluster</name>
        <dbReference type="ChEBI" id="CHEBI:49883"/>
        <note>4Fe-4S-S-AdoMet</note>
    </ligand>
</feature>
<feature type="binding site" evidence="1">
    <location>
        <begin position="183"/>
        <end position="184"/>
    </location>
    <ligand>
        <name>S-adenosyl-L-methionine</name>
        <dbReference type="ChEBI" id="CHEBI:59789"/>
    </ligand>
</feature>
<feature type="binding site" evidence="1">
    <location>
        <position position="215"/>
    </location>
    <ligand>
        <name>S-adenosyl-L-methionine</name>
        <dbReference type="ChEBI" id="CHEBI:59789"/>
    </ligand>
</feature>
<feature type="binding site" evidence="1">
    <location>
        <begin position="237"/>
        <end position="239"/>
    </location>
    <ligand>
        <name>S-adenosyl-L-methionine</name>
        <dbReference type="ChEBI" id="CHEBI:59789"/>
    </ligand>
</feature>
<feature type="binding site" evidence="1">
    <location>
        <position position="316"/>
    </location>
    <ligand>
        <name>S-adenosyl-L-methionine</name>
        <dbReference type="ChEBI" id="CHEBI:59789"/>
    </ligand>
</feature>
<feature type="disulfide bond" description="(transient)" evidence="1">
    <location>
        <begin position="122"/>
        <end position="359"/>
    </location>
</feature>
<organism>
    <name type="scientific">Enterobacter sp. (strain 638)</name>
    <dbReference type="NCBI Taxonomy" id="399742"/>
    <lineage>
        <taxon>Bacteria</taxon>
        <taxon>Pseudomonadati</taxon>
        <taxon>Pseudomonadota</taxon>
        <taxon>Gammaproteobacteria</taxon>
        <taxon>Enterobacterales</taxon>
        <taxon>Enterobacteriaceae</taxon>
        <taxon>Enterobacter</taxon>
    </lineage>
</organism>
<reference key="1">
    <citation type="journal article" date="2010" name="PLoS Genet.">
        <title>Genome sequence of the plant growth promoting endophytic bacterium Enterobacter sp. 638.</title>
        <authorList>
            <person name="Taghavi S."/>
            <person name="van der Lelie D."/>
            <person name="Hoffman A."/>
            <person name="Zhang Y.B."/>
            <person name="Walla M.D."/>
            <person name="Vangronsveld J."/>
            <person name="Newman L."/>
            <person name="Monchy S."/>
        </authorList>
    </citation>
    <scope>NUCLEOTIDE SEQUENCE [LARGE SCALE GENOMIC DNA]</scope>
    <source>
        <strain>638</strain>
    </source>
</reference>
<name>RLMN_ENT38</name>
<dbReference type="EC" id="2.1.1.192" evidence="1"/>
<dbReference type="EMBL" id="CP000653">
    <property type="protein sequence ID" value="ABP61675.1"/>
    <property type="molecule type" value="Genomic_DNA"/>
</dbReference>
<dbReference type="RefSeq" id="WP_015960007.1">
    <property type="nucleotide sequence ID" value="NC_009436.1"/>
</dbReference>
<dbReference type="SMR" id="A4WD95"/>
<dbReference type="STRING" id="399742.Ent638_3011"/>
<dbReference type="KEGG" id="ent:Ent638_3011"/>
<dbReference type="eggNOG" id="COG0820">
    <property type="taxonomic scope" value="Bacteria"/>
</dbReference>
<dbReference type="HOGENOM" id="CLU_029101_0_0_6"/>
<dbReference type="OrthoDB" id="9793973at2"/>
<dbReference type="Proteomes" id="UP000000230">
    <property type="component" value="Chromosome"/>
</dbReference>
<dbReference type="GO" id="GO:0005737">
    <property type="term" value="C:cytoplasm"/>
    <property type="evidence" value="ECO:0007669"/>
    <property type="project" value="UniProtKB-SubCell"/>
</dbReference>
<dbReference type="GO" id="GO:0051539">
    <property type="term" value="F:4 iron, 4 sulfur cluster binding"/>
    <property type="evidence" value="ECO:0007669"/>
    <property type="project" value="UniProtKB-UniRule"/>
</dbReference>
<dbReference type="GO" id="GO:0046872">
    <property type="term" value="F:metal ion binding"/>
    <property type="evidence" value="ECO:0007669"/>
    <property type="project" value="UniProtKB-KW"/>
</dbReference>
<dbReference type="GO" id="GO:0070040">
    <property type="term" value="F:rRNA (adenine(2503)-C2-)-methyltransferase activity"/>
    <property type="evidence" value="ECO:0007669"/>
    <property type="project" value="UniProtKB-UniRule"/>
</dbReference>
<dbReference type="GO" id="GO:0019843">
    <property type="term" value="F:rRNA binding"/>
    <property type="evidence" value="ECO:0007669"/>
    <property type="project" value="UniProtKB-UniRule"/>
</dbReference>
<dbReference type="GO" id="GO:0002935">
    <property type="term" value="F:tRNA (adenine(37)-C2)-methyltransferase activity"/>
    <property type="evidence" value="ECO:0007669"/>
    <property type="project" value="UniProtKB-UniRule"/>
</dbReference>
<dbReference type="GO" id="GO:0000049">
    <property type="term" value="F:tRNA binding"/>
    <property type="evidence" value="ECO:0007669"/>
    <property type="project" value="UniProtKB-UniRule"/>
</dbReference>
<dbReference type="GO" id="GO:0070475">
    <property type="term" value="P:rRNA base methylation"/>
    <property type="evidence" value="ECO:0007669"/>
    <property type="project" value="UniProtKB-UniRule"/>
</dbReference>
<dbReference type="GO" id="GO:0030488">
    <property type="term" value="P:tRNA methylation"/>
    <property type="evidence" value="ECO:0007669"/>
    <property type="project" value="UniProtKB-UniRule"/>
</dbReference>
<dbReference type="CDD" id="cd01335">
    <property type="entry name" value="Radical_SAM"/>
    <property type="match status" value="1"/>
</dbReference>
<dbReference type="FunFam" id="1.10.150.530:FF:000001">
    <property type="entry name" value="Dual-specificity RNA methyltransferase RlmN"/>
    <property type="match status" value="1"/>
</dbReference>
<dbReference type="FunFam" id="3.20.20.70:FF:000008">
    <property type="entry name" value="Dual-specificity RNA methyltransferase RlmN"/>
    <property type="match status" value="1"/>
</dbReference>
<dbReference type="Gene3D" id="1.10.150.530">
    <property type="match status" value="1"/>
</dbReference>
<dbReference type="Gene3D" id="3.20.20.70">
    <property type="entry name" value="Aldolase class I"/>
    <property type="match status" value="1"/>
</dbReference>
<dbReference type="HAMAP" id="MF_01849">
    <property type="entry name" value="RNA_methyltr_RlmN"/>
    <property type="match status" value="1"/>
</dbReference>
<dbReference type="InterPro" id="IPR013785">
    <property type="entry name" value="Aldolase_TIM"/>
</dbReference>
<dbReference type="InterPro" id="IPR040072">
    <property type="entry name" value="Methyltransferase_A"/>
</dbReference>
<dbReference type="InterPro" id="IPR048641">
    <property type="entry name" value="RlmN_N"/>
</dbReference>
<dbReference type="InterPro" id="IPR027492">
    <property type="entry name" value="RNA_MTrfase_RlmN"/>
</dbReference>
<dbReference type="InterPro" id="IPR004383">
    <property type="entry name" value="rRNA_lsu_MTrfase_RlmN/Cfr"/>
</dbReference>
<dbReference type="InterPro" id="IPR007197">
    <property type="entry name" value="rSAM"/>
</dbReference>
<dbReference type="NCBIfam" id="NF008396">
    <property type="entry name" value="PRK11194.1"/>
    <property type="match status" value="1"/>
</dbReference>
<dbReference type="NCBIfam" id="TIGR00048">
    <property type="entry name" value="rRNA_mod_RlmN"/>
    <property type="match status" value="1"/>
</dbReference>
<dbReference type="PANTHER" id="PTHR30544">
    <property type="entry name" value="23S RRNA METHYLTRANSFERASE"/>
    <property type="match status" value="1"/>
</dbReference>
<dbReference type="PANTHER" id="PTHR30544:SF5">
    <property type="entry name" value="RADICAL SAM CORE DOMAIN-CONTAINING PROTEIN"/>
    <property type="match status" value="1"/>
</dbReference>
<dbReference type="Pfam" id="PF04055">
    <property type="entry name" value="Radical_SAM"/>
    <property type="match status" value="1"/>
</dbReference>
<dbReference type="Pfam" id="PF21016">
    <property type="entry name" value="RlmN_N"/>
    <property type="match status" value="1"/>
</dbReference>
<dbReference type="PIRSF" id="PIRSF006004">
    <property type="entry name" value="CHP00048"/>
    <property type="match status" value="1"/>
</dbReference>
<dbReference type="SFLD" id="SFLDF00275">
    <property type="entry name" value="adenosine_C2_methyltransferase"/>
    <property type="match status" value="1"/>
</dbReference>
<dbReference type="SFLD" id="SFLDG01062">
    <property type="entry name" value="methyltransferase_(Class_A)"/>
    <property type="match status" value="1"/>
</dbReference>
<dbReference type="SUPFAM" id="SSF102114">
    <property type="entry name" value="Radical SAM enzymes"/>
    <property type="match status" value="1"/>
</dbReference>
<dbReference type="PROSITE" id="PS51918">
    <property type="entry name" value="RADICAL_SAM"/>
    <property type="match status" value="1"/>
</dbReference>
<proteinExistence type="inferred from homology"/>
<keyword id="KW-0004">4Fe-4S</keyword>
<keyword id="KW-0963">Cytoplasm</keyword>
<keyword id="KW-1015">Disulfide bond</keyword>
<keyword id="KW-0408">Iron</keyword>
<keyword id="KW-0411">Iron-sulfur</keyword>
<keyword id="KW-0479">Metal-binding</keyword>
<keyword id="KW-0489">Methyltransferase</keyword>
<keyword id="KW-0698">rRNA processing</keyword>
<keyword id="KW-0949">S-adenosyl-L-methionine</keyword>
<keyword id="KW-0808">Transferase</keyword>
<keyword id="KW-0819">tRNA processing</keyword>
<accession>A4WD95</accession>
<evidence type="ECO:0000255" key="1">
    <source>
        <dbReference type="HAMAP-Rule" id="MF_01849"/>
    </source>
</evidence>
<evidence type="ECO:0000255" key="2">
    <source>
        <dbReference type="PROSITE-ProRule" id="PRU01266"/>
    </source>
</evidence>
<gene>
    <name evidence="1" type="primary">rlmN</name>
    <name type="ordered locus">Ent638_3011</name>
</gene>
<comment type="function">
    <text evidence="1">Specifically methylates position 2 of adenine 2503 in 23S rRNA and position 2 of adenine 37 in tRNAs. m2A2503 modification seems to play a crucial role in the proofreading step occurring at the peptidyl transferase center and thus would serve to optimize ribosomal fidelity.</text>
</comment>
<comment type="catalytic activity">
    <reaction evidence="1">
        <text>adenosine(2503) in 23S rRNA + 2 reduced [2Fe-2S]-[ferredoxin] + 2 S-adenosyl-L-methionine = 2-methyladenosine(2503) in 23S rRNA + 5'-deoxyadenosine + L-methionine + 2 oxidized [2Fe-2S]-[ferredoxin] + S-adenosyl-L-homocysteine</text>
        <dbReference type="Rhea" id="RHEA:42916"/>
        <dbReference type="Rhea" id="RHEA-COMP:10000"/>
        <dbReference type="Rhea" id="RHEA-COMP:10001"/>
        <dbReference type="Rhea" id="RHEA-COMP:10152"/>
        <dbReference type="Rhea" id="RHEA-COMP:10282"/>
        <dbReference type="ChEBI" id="CHEBI:17319"/>
        <dbReference type="ChEBI" id="CHEBI:33737"/>
        <dbReference type="ChEBI" id="CHEBI:33738"/>
        <dbReference type="ChEBI" id="CHEBI:57844"/>
        <dbReference type="ChEBI" id="CHEBI:57856"/>
        <dbReference type="ChEBI" id="CHEBI:59789"/>
        <dbReference type="ChEBI" id="CHEBI:74411"/>
        <dbReference type="ChEBI" id="CHEBI:74497"/>
        <dbReference type="EC" id="2.1.1.192"/>
    </reaction>
</comment>
<comment type="catalytic activity">
    <reaction evidence="1">
        <text>adenosine(37) in tRNA + 2 reduced [2Fe-2S]-[ferredoxin] + 2 S-adenosyl-L-methionine = 2-methyladenosine(37) in tRNA + 5'-deoxyadenosine + L-methionine + 2 oxidized [2Fe-2S]-[ferredoxin] + S-adenosyl-L-homocysteine</text>
        <dbReference type="Rhea" id="RHEA:43332"/>
        <dbReference type="Rhea" id="RHEA-COMP:10000"/>
        <dbReference type="Rhea" id="RHEA-COMP:10001"/>
        <dbReference type="Rhea" id="RHEA-COMP:10162"/>
        <dbReference type="Rhea" id="RHEA-COMP:10485"/>
        <dbReference type="ChEBI" id="CHEBI:17319"/>
        <dbReference type="ChEBI" id="CHEBI:33737"/>
        <dbReference type="ChEBI" id="CHEBI:33738"/>
        <dbReference type="ChEBI" id="CHEBI:57844"/>
        <dbReference type="ChEBI" id="CHEBI:57856"/>
        <dbReference type="ChEBI" id="CHEBI:59789"/>
        <dbReference type="ChEBI" id="CHEBI:74411"/>
        <dbReference type="ChEBI" id="CHEBI:74497"/>
        <dbReference type="EC" id="2.1.1.192"/>
    </reaction>
</comment>
<comment type="cofactor">
    <cofactor evidence="1">
        <name>[4Fe-4S] cluster</name>
        <dbReference type="ChEBI" id="CHEBI:49883"/>
    </cofactor>
    <text evidence="1">Binds 1 [4Fe-4S] cluster. The cluster is coordinated with 3 cysteines and an exchangeable S-adenosyl-L-methionine.</text>
</comment>
<comment type="subcellular location">
    <subcellularLocation>
        <location evidence="1">Cytoplasm</location>
    </subcellularLocation>
</comment>
<comment type="miscellaneous">
    <text evidence="1">Reaction proceeds by a ping-pong mechanism involving intermediate methylation of a conserved cysteine residue.</text>
</comment>
<comment type="similarity">
    <text evidence="1">Belongs to the radical SAM superfamily. RlmN family.</text>
</comment>